<evidence type="ECO:0000255" key="1">
    <source>
        <dbReference type="HAMAP-Rule" id="MF_00725"/>
    </source>
</evidence>
<gene>
    <name evidence="1" type="primary">flhD</name>
    <name type="ordered locus">EcSMS35_1292</name>
</gene>
<dbReference type="EMBL" id="CP000970">
    <property type="protein sequence ID" value="ACB17925.1"/>
    <property type="molecule type" value="Genomic_DNA"/>
</dbReference>
<dbReference type="RefSeq" id="WP_001295647.1">
    <property type="nucleotide sequence ID" value="NC_010498.1"/>
</dbReference>
<dbReference type="SMR" id="B1LQW3"/>
<dbReference type="GeneID" id="93776197"/>
<dbReference type="KEGG" id="ecm:EcSMS35_1292"/>
<dbReference type="HOGENOM" id="CLU_144160_0_0_6"/>
<dbReference type="Proteomes" id="UP000007011">
    <property type="component" value="Chromosome"/>
</dbReference>
<dbReference type="GO" id="GO:0005737">
    <property type="term" value="C:cytoplasm"/>
    <property type="evidence" value="ECO:0007669"/>
    <property type="project" value="UniProtKB-SubCell"/>
</dbReference>
<dbReference type="GO" id="GO:0003677">
    <property type="term" value="F:DNA binding"/>
    <property type="evidence" value="ECO:0007669"/>
    <property type="project" value="UniProtKB-UniRule"/>
</dbReference>
<dbReference type="GO" id="GO:0044780">
    <property type="term" value="P:bacterial-type flagellum assembly"/>
    <property type="evidence" value="ECO:0007669"/>
    <property type="project" value="InterPro"/>
</dbReference>
<dbReference type="GO" id="GO:0045893">
    <property type="term" value="P:positive regulation of DNA-templated transcription"/>
    <property type="evidence" value="ECO:0007669"/>
    <property type="project" value="InterPro"/>
</dbReference>
<dbReference type="GO" id="GO:1902208">
    <property type="term" value="P:regulation of bacterial-type flagellum assembly"/>
    <property type="evidence" value="ECO:0007669"/>
    <property type="project" value="UniProtKB-UniRule"/>
</dbReference>
<dbReference type="FunFam" id="1.10.4000.10:FF:000001">
    <property type="entry name" value="Flagellar transcriptional regulator FlhD"/>
    <property type="match status" value="1"/>
</dbReference>
<dbReference type="Gene3D" id="1.10.4000.10">
    <property type="entry name" value="Flagellar transcriptional activator FlhD"/>
    <property type="match status" value="1"/>
</dbReference>
<dbReference type="HAMAP" id="MF_00725">
    <property type="entry name" value="FlhD"/>
    <property type="match status" value="1"/>
</dbReference>
<dbReference type="InterPro" id="IPR023559">
    <property type="entry name" value="Flagellar_FlhD"/>
</dbReference>
<dbReference type="InterPro" id="IPR036194">
    <property type="entry name" value="FlhD_sf"/>
</dbReference>
<dbReference type="NCBIfam" id="NF002783">
    <property type="entry name" value="PRK02909.1-1"/>
    <property type="match status" value="1"/>
</dbReference>
<dbReference type="Pfam" id="PF05247">
    <property type="entry name" value="FlhD"/>
    <property type="match status" value="1"/>
</dbReference>
<dbReference type="SUPFAM" id="SSF63592">
    <property type="entry name" value="Flagellar transcriptional activator FlhD"/>
    <property type="match status" value="1"/>
</dbReference>
<proteinExistence type="inferred from homology"/>
<protein>
    <recommendedName>
        <fullName evidence="1">Flagellar transcriptional regulator FlhD</fullName>
    </recommendedName>
</protein>
<keyword id="KW-0010">Activator</keyword>
<keyword id="KW-1005">Bacterial flagellum biogenesis</keyword>
<keyword id="KW-0963">Cytoplasm</keyword>
<keyword id="KW-1015">Disulfide bond</keyword>
<keyword id="KW-0238">DNA-binding</keyword>
<keyword id="KW-0804">Transcription</keyword>
<keyword id="KW-0805">Transcription regulation</keyword>
<organism>
    <name type="scientific">Escherichia coli (strain SMS-3-5 / SECEC)</name>
    <dbReference type="NCBI Taxonomy" id="439855"/>
    <lineage>
        <taxon>Bacteria</taxon>
        <taxon>Pseudomonadati</taxon>
        <taxon>Pseudomonadota</taxon>
        <taxon>Gammaproteobacteria</taxon>
        <taxon>Enterobacterales</taxon>
        <taxon>Enterobacteriaceae</taxon>
        <taxon>Escherichia</taxon>
    </lineage>
</organism>
<accession>B1LQW3</accession>
<name>FLHD_ECOSM</name>
<reference key="1">
    <citation type="journal article" date="2008" name="J. Bacteriol.">
        <title>Insights into the environmental resistance gene pool from the genome sequence of the multidrug-resistant environmental isolate Escherichia coli SMS-3-5.</title>
        <authorList>
            <person name="Fricke W.F."/>
            <person name="Wright M.S."/>
            <person name="Lindell A.H."/>
            <person name="Harkins D.M."/>
            <person name="Baker-Austin C."/>
            <person name="Ravel J."/>
            <person name="Stepanauskas R."/>
        </authorList>
    </citation>
    <scope>NUCLEOTIDE SEQUENCE [LARGE SCALE GENOMIC DNA]</scope>
    <source>
        <strain>SMS-3-5 / SECEC</strain>
    </source>
</reference>
<sequence>MHTSELLKHIYDINLSYLLLAQRLIVQDKASAMFRLGINEEMATTLAALTLPQMVKLAETNQLVCHFRFDSHQTITQLTQDSRVDDLQQIHTGIMLSTRLLNDVNQPEEALRKKRA</sequence>
<comment type="function">
    <text evidence="1">Functions in complex with FlhC as a master transcriptional regulator that regulates transcription of several flagellar and non-flagellar operons by binding to their promoter region. Activates expression of class 2 flagellar genes, including fliA, which is a flagellum-specific sigma factor that turns on the class 3 genes. Also regulates genes whose products function in a variety of physiological pathways.</text>
</comment>
<comment type="subunit">
    <text evidence="1">Homodimer; disulfide-linked. Forms a heterohexamer composed of two FlhC and four FlhD subunits. Each FlhC binds a FlhD dimer, forming a heterotrimer, and a hexamer assembles by dimerization of two heterotrimers.</text>
</comment>
<comment type="subcellular location">
    <subcellularLocation>
        <location evidence="1">Cytoplasm</location>
    </subcellularLocation>
</comment>
<comment type="domain">
    <text evidence="1">The C-terminal region contains a putative helix-turn-helix (HTH) motif, suggesting that this region may bind DNA.</text>
</comment>
<comment type="similarity">
    <text evidence="1">Belongs to the FlhD family.</text>
</comment>
<feature type="chain" id="PRO_1000132686" description="Flagellar transcriptional regulator FlhD">
    <location>
        <begin position="1"/>
        <end position="116"/>
    </location>
</feature>
<feature type="disulfide bond" description="Interchain" evidence="1">
    <location>
        <position position="65"/>
    </location>
</feature>